<comment type="function">
    <text evidence="1">Cell wall formation. Catalyzes the transfer of a GlcNAc subunit on undecaprenyl-pyrophosphoryl-MurNAc-pentapeptide (lipid intermediate I) to form undecaprenyl-pyrophosphoryl-MurNAc-(pentapeptide)GlcNAc (lipid intermediate II).</text>
</comment>
<comment type="catalytic activity">
    <reaction evidence="1">
        <text>di-trans,octa-cis-undecaprenyl diphospho-N-acetyl-alpha-D-muramoyl-L-alanyl-D-glutamyl-meso-2,6-diaminopimeloyl-D-alanyl-D-alanine + UDP-N-acetyl-alpha-D-glucosamine = di-trans,octa-cis-undecaprenyl diphospho-[N-acetyl-alpha-D-glucosaminyl-(1-&gt;4)]-N-acetyl-alpha-D-muramoyl-L-alanyl-D-glutamyl-meso-2,6-diaminopimeloyl-D-alanyl-D-alanine + UDP + H(+)</text>
        <dbReference type="Rhea" id="RHEA:31227"/>
        <dbReference type="ChEBI" id="CHEBI:15378"/>
        <dbReference type="ChEBI" id="CHEBI:57705"/>
        <dbReference type="ChEBI" id="CHEBI:58223"/>
        <dbReference type="ChEBI" id="CHEBI:61387"/>
        <dbReference type="ChEBI" id="CHEBI:61388"/>
        <dbReference type="EC" id="2.4.1.227"/>
    </reaction>
</comment>
<comment type="pathway">
    <text evidence="1">Cell wall biogenesis; peptidoglycan biosynthesis.</text>
</comment>
<comment type="subcellular location">
    <subcellularLocation>
        <location evidence="1">Cell membrane</location>
        <topology evidence="1">Peripheral membrane protein</topology>
        <orientation evidence="1">Cytoplasmic side</orientation>
    </subcellularLocation>
</comment>
<comment type="similarity">
    <text evidence="1">Belongs to the glycosyltransferase 28 family. MurG subfamily.</text>
</comment>
<organism>
    <name type="scientific">Clostridium botulinum (strain Alaska E43 / Type E3)</name>
    <dbReference type="NCBI Taxonomy" id="508767"/>
    <lineage>
        <taxon>Bacteria</taxon>
        <taxon>Bacillati</taxon>
        <taxon>Bacillota</taxon>
        <taxon>Clostridia</taxon>
        <taxon>Eubacteriales</taxon>
        <taxon>Clostridiaceae</taxon>
        <taxon>Clostridium</taxon>
    </lineage>
</organism>
<evidence type="ECO:0000255" key="1">
    <source>
        <dbReference type="HAMAP-Rule" id="MF_00033"/>
    </source>
</evidence>
<reference key="1">
    <citation type="submission" date="2008-05" db="EMBL/GenBank/DDBJ databases">
        <title>Complete genome sequence of Clostridium botulinum E3 str. Alaska E43.</title>
        <authorList>
            <person name="Brinkac L.M."/>
            <person name="Brown J.L."/>
            <person name="Bruce D."/>
            <person name="Detter C."/>
            <person name="Munk C."/>
            <person name="Smith L.A."/>
            <person name="Smith T.J."/>
            <person name="Sutton G."/>
            <person name="Brettin T.S."/>
        </authorList>
    </citation>
    <scope>NUCLEOTIDE SEQUENCE [LARGE SCALE GENOMIC DNA]</scope>
    <source>
        <strain>Alaska E43 / Type E3</strain>
    </source>
</reference>
<dbReference type="EC" id="2.4.1.227" evidence="1"/>
<dbReference type="EMBL" id="CP001078">
    <property type="protein sequence ID" value="ACD52855.1"/>
    <property type="molecule type" value="Genomic_DNA"/>
</dbReference>
<dbReference type="RefSeq" id="WP_012450902.1">
    <property type="nucleotide sequence ID" value="NC_010723.1"/>
</dbReference>
<dbReference type="SMR" id="B2V1X5"/>
<dbReference type="CAZy" id="GT28">
    <property type="family name" value="Glycosyltransferase Family 28"/>
</dbReference>
<dbReference type="KEGG" id="cbt:CLH_0754"/>
<dbReference type="HOGENOM" id="CLU_037404_0_0_9"/>
<dbReference type="UniPathway" id="UPA00219"/>
<dbReference type="GO" id="GO:0005886">
    <property type="term" value="C:plasma membrane"/>
    <property type="evidence" value="ECO:0007669"/>
    <property type="project" value="UniProtKB-SubCell"/>
</dbReference>
<dbReference type="GO" id="GO:0051991">
    <property type="term" value="F:UDP-N-acetyl-D-glucosamine:N-acetylmuramoyl-L-alanyl-D-glutamyl-meso-2,6-diaminopimelyl-D-alanyl-D-alanine-diphosphoundecaprenol 4-beta-N-acetylglucosaminlytransferase activity"/>
    <property type="evidence" value="ECO:0007669"/>
    <property type="project" value="RHEA"/>
</dbReference>
<dbReference type="GO" id="GO:0050511">
    <property type="term" value="F:undecaprenyldiphospho-muramoylpentapeptide beta-N-acetylglucosaminyltransferase activity"/>
    <property type="evidence" value="ECO:0007669"/>
    <property type="project" value="UniProtKB-UniRule"/>
</dbReference>
<dbReference type="GO" id="GO:0005975">
    <property type="term" value="P:carbohydrate metabolic process"/>
    <property type="evidence" value="ECO:0007669"/>
    <property type="project" value="InterPro"/>
</dbReference>
<dbReference type="GO" id="GO:0051301">
    <property type="term" value="P:cell division"/>
    <property type="evidence" value="ECO:0007669"/>
    <property type="project" value="UniProtKB-KW"/>
</dbReference>
<dbReference type="GO" id="GO:0071555">
    <property type="term" value="P:cell wall organization"/>
    <property type="evidence" value="ECO:0007669"/>
    <property type="project" value="UniProtKB-KW"/>
</dbReference>
<dbReference type="GO" id="GO:0030259">
    <property type="term" value="P:lipid glycosylation"/>
    <property type="evidence" value="ECO:0007669"/>
    <property type="project" value="UniProtKB-UniRule"/>
</dbReference>
<dbReference type="GO" id="GO:0009252">
    <property type="term" value="P:peptidoglycan biosynthetic process"/>
    <property type="evidence" value="ECO:0007669"/>
    <property type="project" value="UniProtKB-UniRule"/>
</dbReference>
<dbReference type="GO" id="GO:0008360">
    <property type="term" value="P:regulation of cell shape"/>
    <property type="evidence" value="ECO:0007669"/>
    <property type="project" value="UniProtKB-KW"/>
</dbReference>
<dbReference type="CDD" id="cd03785">
    <property type="entry name" value="GT28_MurG"/>
    <property type="match status" value="1"/>
</dbReference>
<dbReference type="Gene3D" id="3.40.50.2000">
    <property type="entry name" value="Glycogen Phosphorylase B"/>
    <property type="match status" value="2"/>
</dbReference>
<dbReference type="HAMAP" id="MF_00033">
    <property type="entry name" value="MurG"/>
    <property type="match status" value="1"/>
</dbReference>
<dbReference type="InterPro" id="IPR006009">
    <property type="entry name" value="GlcNAc_MurG"/>
</dbReference>
<dbReference type="InterPro" id="IPR007235">
    <property type="entry name" value="Glyco_trans_28_C"/>
</dbReference>
<dbReference type="InterPro" id="IPR004276">
    <property type="entry name" value="GlycoTrans_28_N"/>
</dbReference>
<dbReference type="NCBIfam" id="TIGR01133">
    <property type="entry name" value="murG"/>
    <property type="match status" value="1"/>
</dbReference>
<dbReference type="NCBIfam" id="NF009102">
    <property type="entry name" value="PRK12446.1"/>
    <property type="match status" value="1"/>
</dbReference>
<dbReference type="PANTHER" id="PTHR21015:SF27">
    <property type="entry name" value="UDP-N-ACETYLGLUCOSAMINE--N-ACETYLMURAMYL-(PENTAPEPTIDE) PYROPHOSPHORYL-UNDECAPRENOL N-ACETYLGLUCOSAMINE TRANSFERASE"/>
    <property type="match status" value="1"/>
</dbReference>
<dbReference type="PANTHER" id="PTHR21015">
    <property type="entry name" value="UDP-N-ACETYLGLUCOSAMINE--N-ACETYLMURAMYL-(PENTAPEPTIDE) PYROPHOSPHORYL-UNDECAPRENOL N-ACETYLGLUCOSAMINE TRANSFERASE 1"/>
    <property type="match status" value="1"/>
</dbReference>
<dbReference type="Pfam" id="PF04101">
    <property type="entry name" value="Glyco_tran_28_C"/>
    <property type="match status" value="1"/>
</dbReference>
<dbReference type="Pfam" id="PF03033">
    <property type="entry name" value="Glyco_transf_28"/>
    <property type="match status" value="1"/>
</dbReference>
<dbReference type="SUPFAM" id="SSF53756">
    <property type="entry name" value="UDP-Glycosyltransferase/glycogen phosphorylase"/>
    <property type="match status" value="1"/>
</dbReference>
<proteinExistence type="inferred from homology"/>
<keyword id="KW-0131">Cell cycle</keyword>
<keyword id="KW-0132">Cell division</keyword>
<keyword id="KW-1003">Cell membrane</keyword>
<keyword id="KW-0133">Cell shape</keyword>
<keyword id="KW-0961">Cell wall biogenesis/degradation</keyword>
<keyword id="KW-0328">Glycosyltransferase</keyword>
<keyword id="KW-0472">Membrane</keyword>
<keyword id="KW-0573">Peptidoglycan synthesis</keyword>
<keyword id="KW-0808">Transferase</keyword>
<protein>
    <recommendedName>
        <fullName evidence="1">UDP-N-acetylglucosamine--N-acetylmuramyl-(pentapeptide) pyrophosphoryl-undecaprenol N-acetylglucosamine transferase</fullName>
        <ecNumber evidence="1">2.4.1.227</ecNumber>
    </recommendedName>
    <alternativeName>
        <fullName evidence="1">Undecaprenyl-PP-MurNAc-pentapeptide-UDPGlcNAc GlcNAc transferase</fullName>
    </alternativeName>
</protein>
<accession>B2V1X5</accession>
<name>MURG_CLOBA</name>
<gene>
    <name evidence="1" type="primary">murG</name>
    <name type="ordered locus">CLH_0754</name>
</gene>
<sequence length="358" mass="39808">MYKYKVIMTGGGTAGHVTPNLALVPALKENGFEVKYIGSKDGIEKEIIKNNNIPYFQISSGKLRRYFDLKNFSDPFKVLKGIKDANKILKKEKPDVVFSKGGFVAVPVVIAAHLRKIPVVAHESDMTPGLANKLSAPFCSKLCVTFRESLKYIKDNKGVLTGSPIRTEILNGSKEKGLEICNFNKSKEVILIMGGSLGSKIINDEIRGNLELLLKDFNIIHICGKGNLDNNLLDKVGYKQFEYVSEELPDLMSAADYIISRAGANSIFEFLALRKPMLLIPLSKKASRGDQILNANSFKNEGYALVLNEEELINSTLYNKILELKSNKKNIINAMNNMNGKNSIDLIIEVILKSIKEY</sequence>
<feature type="chain" id="PRO_1000090420" description="UDP-N-acetylglucosamine--N-acetylmuramyl-(pentapeptide) pyrophosphoryl-undecaprenol N-acetylglucosamine transferase">
    <location>
        <begin position="1"/>
        <end position="358"/>
    </location>
</feature>
<feature type="binding site" evidence="1">
    <location>
        <begin position="13"/>
        <end position="15"/>
    </location>
    <ligand>
        <name>UDP-N-acetyl-alpha-D-glucosamine</name>
        <dbReference type="ChEBI" id="CHEBI:57705"/>
    </ligand>
</feature>
<feature type="binding site" evidence="1">
    <location>
        <position position="166"/>
    </location>
    <ligand>
        <name>UDP-N-acetyl-alpha-D-glucosamine</name>
        <dbReference type="ChEBI" id="CHEBI:57705"/>
    </ligand>
</feature>
<feature type="binding site" evidence="1">
    <location>
        <position position="196"/>
    </location>
    <ligand>
        <name>UDP-N-acetyl-alpha-D-glucosamine</name>
        <dbReference type="ChEBI" id="CHEBI:57705"/>
    </ligand>
</feature>
<feature type="binding site" evidence="1">
    <location>
        <position position="291"/>
    </location>
    <ligand>
        <name>UDP-N-acetyl-alpha-D-glucosamine</name>
        <dbReference type="ChEBI" id="CHEBI:57705"/>
    </ligand>
</feature>